<name>ENGB_STAAS</name>
<dbReference type="EMBL" id="BX571857">
    <property type="protein sequence ID" value="CAG43404.1"/>
    <property type="molecule type" value="Genomic_DNA"/>
</dbReference>
<dbReference type="SMR" id="Q6G8Q2"/>
<dbReference type="KEGG" id="sas:SAS1602"/>
<dbReference type="HOGENOM" id="CLU_033732_3_0_9"/>
<dbReference type="GO" id="GO:0005829">
    <property type="term" value="C:cytosol"/>
    <property type="evidence" value="ECO:0007669"/>
    <property type="project" value="TreeGrafter"/>
</dbReference>
<dbReference type="GO" id="GO:0005525">
    <property type="term" value="F:GTP binding"/>
    <property type="evidence" value="ECO:0007669"/>
    <property type="project" value="UniProtKB-UniRule"/>
</dbReference>
<dbReference type="GO" id="GO:0046872">
    <property type="term" value="F:metal ion binding"/>
    <property type="evidence" value="ECO:0007669"/>
    <property type="project" value="UniProtKB-KW"/>
</dbReference>
<dbReference type="GO" id="GO:0000917">
    <property type="term" value="P:division septum assembly"/>
    <property type="evidence" value="ECO:0007669"/>
    <property type="project" value="UniProtKB-KW"/>
</dbReference>
<dbReference type="CDD" id="cd01876">
    <property type="entry name" value="YihA_EngB"/>
    <property type="match status" value="1"/>
</dbReference>
<dbReference type="FunFam" id="3.40.50.300:FF:000098">
    <property type="entry name" value="Probable GTP-binding protein EngB"/>
    <property type="match status" value="1"/>
</dbReference>
<dbReference type="Gene3D" id="3.40.50.300">
    <property type="entry name" value="P-loop containing nucleotide triphosphate hydrolases"/>
    <property type="match status" value="1"/>
</dbReference>
<dbReference type="HAMAP" id="MF_00321">
    <property type="entry name" value="GTPase_EngB"/>
    <property type="match status" value="1"/>
</dbReference>
<dbReference type="InterPro" id="IPR030393">
    <property type="entry name" value="G_ENGB_dom"/>
</dbReference>
<dbReference type="InterPro" id="IPR006073">
    <property type="entry name" value="GTP-bd"/>
</dbReference>
<dbReference type="InterPro" id="IPR019987">
    <property type="entry name" value="GTP-bd_ribosome_bio_YsxC"/>
</dbReference>
<dbReference type="InterPro" id="IPR027417">
    <property type="entry name" value="P-loop_NTPase"/>
</dbReference>
<dbReference type="NCBIfam" id="TIGR03598">
    <property type="entry name" value="GTPase_YsxC"/>
    <property type="match status" value="1"/>
</dbReference>
<dbReference type="PANTHER" id="PTHR11649:SF13">
    <property type="entry name" value="ENGB-TYPE G DOMAIN-CONTAINING PROTEIN"/>
    <property type="match status" value="1"/>
</dbReference>
<dbReference type="PANTHER" id="PTHR11649">
    <property type="entry name" value="MSS1/TRME-RELATED GTP-BINDING PROTEIN"/>
    <property type="match status" value="1"/>
</dbReference>
<dbReference type="Pfam" id="PF01926">
    <property type="entry name" value="MMR_HSR1"/>
    <property type="match status" value="1"/>
</dbReference>
<dbReference type="SUPFAM" id="SSF52540">
    <property type="entry name" value="P-loop containing nucleoside triphosphate hydrolases"/>
    <property type="match status" value="1"/>
</dbReference>
<dbReference type="PROSITE" id="PS51706">
    <property type="entry name" value="G_ENGB"/>
    <property type="match status" value="1"/>
</dbReference>
<comment type="function">
    <text evidence="1">Necessary for normal cell division and for the maintenance of normal septation.</text>
</comment>
<comment type="cofactor">
    <cofactor evidence="1">
        <name>Mg(2+)</name>
        <dbReference type="ChEBI" id="CHEBI:18420"/>
    </cofactor>
</comment>
<comment type="similarity">
    <text evidence="1">Belongs to the TRAFAC class TrmE-Era-EngA-EngB-Septin-like GTPase superfamily. EngB GTPase family.</text>
</comment>
<gene>
    <name evidence="1" type="primary">engB</name>
    <name type="ordered locus">SAS1602</name>
</gene>
<accession>Q6G8Q2</accession>
<sequence>MKVNPNNIELIISAVKEEQYPETELSEVALSGRSNVGKSTFINSMIGRKNMARTSQQPGKTQTLNFYNIDEQLIFVDVPGYGYAKVSKTQREKFGKMIEEYITKRENLQLVIQLVDLRHDPTQDDILMYNYLKHFDIPTLVICTKEDKIPKGKVQKHIKNIKTQLDMDPDDTIVSYSSIQNNKQQQIWNLIEPYIS</sequence>
<evidence type="ECO:0000255" key="1">
    <source>
        <dbReference type="HAMAP-Rule" id="MF_00321"/>
    </source>
</evidence>
<protein>
    <recommendedName>
        <fullName evidence="1">Probable GTP-binding protein EngB</fullName>
    </recommendedName>
</protein>
<reference key="1">
    <citation type="journal article" date="2004" name="Proc. Natl. Acad. Sci. U.S.A.">
        <title>Complete genomes of two clinical Staphylococcus aureus strains: evidence for the rapid evolution of virulence and drug resistance.</title>
        <authorList>
            <person name="Holden M.T.G."/>
            <person name="Feil E.J."/>
            <person name="Lindsay J.A."/>
            <person name="Peacock S.J."/>
            <person name="Day N.P.J."/>
            <person name="Enright M.C."/>
            <person name="Foster T.J."/>
            <person name="Moore C.E."/>
            <person name="Hurst L."/>
            <person name="Atkin R."/>
            <person name="Barron A."/>
            <person name="Bason N."/>
            <person name="Bentley S.D."/>
            <person name="Chillingworth C."/>
            <person name="Chillingworth T."/>
            <person name="Churcher C."/>
            <person name="Clark L."/>
            <person name="Corton C."/>
            <person name="Cronin A."/>
            <person name="Doggett J."/>
            <person name="Dowd L."/>
            <person name="Feltwell T."/>
            <person name="Hance Z."/>
            <person name="Harris B."/>
            <person name="Hauser H."/>
            <person name="Holroyd S."/>
            <person name="Jagels K."/>
            <person name="James K.D."/>
            <person name="Lennard N."/>
            <person name="Line A."/>
            <person name="Mayes R."/>
            <person name="Moule S."/>
            <person name="Mungall K."/>
            <person name="Ormond D."/>
            <person name="Quail M.A."/>
            <person name="Rabbinowitsch E."/>
            <person name="Rutherford K.M."/>
            <person name="Sanders M."/>
            <person name="Sharp S."/>
            <person name="Simmonds M."/>
            <person name="Stevens K."/>
            <person name="Whitehead S."/>
            <person name="Barrell B.G."/>
            <person name="Spratt B.G."/>
            <person name="Parkhill J."/>
        </authorList>
    </citation>
    <scope>NUCLEOTIDE SEQUENCE [LARGE SCALE GENOMIC DNA]</scope>
    <source>
        <strain>MSSA476</strain>
    </source>
</reference>
<keyword id="KW-0131">Cell cycle</keyword>
<keyword id="KW-0132">Cell division</keyword>
<keyword id="KW-0342">GTP-binding</keyword>
<keyword id="KW-0460">Magnesium</keyword>
<keyword id="KW-0479">Metal-binding</keyword>
<keyword id="KW-0547">Nucleotide-binding</keyword>
<keyword id="KW-0717">Septation</keyword>
<proteinExistence type="inferred from homology"/>
<feature type="chain" id="PRO_0000157784" description="Probable GTP-binding protein EngB">
    <location>
        <begin position="1"/>
        <end position="196"/>
    </location>
</feature>
<feature type="domain" description="EngB-type G" evidence="1">
    <location>
        <begin position="24"/>
        <end position="196"/>
    </location>
</feature>
<feature type="binding site" evidence="1">
    <location>
        <begin position="32"/>
        <end position="39"/>
    </location>
    <ligand>
        <name>GTP</name>
        <dbReference type="ChEBI" id="CHEBI:37565"/>
    </ligand>
</feature>
<feature type="binding site" evidence="1">
    <location>
        <position position="39"/>
    </location>
    <ligand>
        <name>Mg(2+)</name>
        <dbReference type="ChEBI" id="CHEBI:18420"/>
    </ligand>
</feature>
<feature type="binding site" evidence="1">
    <location>
        <begin position="59"/>
        <end position="63"/>
    </location>
    <ligand>
        <name>GTP</name>
        <dbReference type="ChEBI" id="CHEBI:37565"/>
    </ligand>
</feature>
<feature type="binding site" evidence="1">
    <location>
        <position position="61"/>
    </location>
    <ligand>
        <name>Mg(2+)</name>
        <dbReference type="ChEBI" id="CHEBI:18420"/>
    </ligand>
</feature>
<feature type="binding site" evidence="1">
    <location>
        <begin position="77"/>
        <end position="80"/>
    </location>
    <ligand>
        <name>GTP</name>
        <dbReference type="ChEBI" id="CHEBI:37565"/>
    </ligand>
</feature>
<feature type="binding site" evidence="1">
    <location>
        <begin position="144"/>
        <end position="147"/>
    </location>
    <ligand>
        <name>GTP</name>
        <dbReference type="ChEBI" id="CHEBI:37565"/>
    </ligand>
</feature>
<feature type="binding site" evidence="1">
    <location>
        <begin position="176"/>
        <end position="178"/>
    </location>
    <ligand>
        <name>GTP</name>
        <dbReference type="ChEBI" id="CHEBI:37565"/>
    </ligand>
</feature>
<organism>
    <name type="scientific">Staphylococcus aureus (strain MSSA476)</name>
    <dbReference type="NCBI Taxonomy" id="282459"/>
    <lineage>
        <taxon>Bacteria</taxon>
        <taxon>Bacillati</taxon>
        <taxon>Bacillota</taxon>
        <taxon>Bacilli</taxon>
        <taxon>Bacillales</taxon>
        <taxon>Staphylococcaceae</taxon>
        <taxon>Staphylococcus</taxon>
    </lineage>
</organism>